<reference key="1">
    <citation type="journal article" date="2005" name="Nature">
        <title>The genome of the social amoeba Dictyostelium discoideum.</title>
        <authorList>
            <person name="Eichinger L."/>
            <person name="Pachebat J.A."/>
            <person name="Gloeckner G."/>
            <person name="Rajandream M.A."/>
            <person name="Sucgang R."/>
            <person name="Berriman M."/>
            <person name="Song J."/>
            <person name="Olsen R."/>
            <person name="Szafranski K."/>
            <person name="Xu Q."/>
            <person name="Tunggal B."/>
            <person name="Kummerfeld S."/>
            <person name="Madera M."/>
            <person name="Konfortov B.A."/>
            <person name="Rivero F."/>
            <person name="Bankier A.T."/>
            <person name="Lehmann R."/>
            <person name="Hamlin N."/>
            <person name="Davies R."/>
            <person name="Gaudet P."/>
            <person name="Fey P."/>
            <person name="Pilcher K."/>
            <person name="Chen G."/>
            <person name="Saunders D."/>
            <person name="Sodergren E.J."/>
            <person name="Davis P."/>
            <person name="Kerhornou A."/>
            <person name="Nie X."/>
            <person name="Hall N."/>
            <person name="Anjard C."/>
            <person name="Hemphill L."/>
            <person name="Bason N."/>
            <person name="Farbrother P."/>
            <person name="Desany B."/>
            <person name="Just E."/>
            <person name="Morio T."/>
            <person name="Rost R."/>
            <person name="Churcher C.M."/>
            <person name="Cooper J."/>
            <person name="Haydock S."/>
            <person name="van Driessche N."/>
            <person name="Cronin A."/>
            <person name="Goodhead I."/>
            <person name="Muzny D.M."/>
            <person name="Mourier T."/>
            <person name="Pain A."/>
            <person name="Lu M."/>
            <person name="Harper D."/>
            <person name="Lindsay R."/>
            <person name="Hauser H."/>
            <person name="James K.D."/>
            <person name="Quiles M."/>
            <person name="Madan Babu M."/>
            <person name="Saito T."/>
            <person name="Buchrieser C."/>
            <person name="Wardroper A."/>
            <person name="Felder M."/>
            <person name="Thangavelu M."/>
            <person name="Johnson D."/>
            <person name="Knights A."/>
            <person name="Loulseged H."/>
            <person name="Mungall K.L."/>
            <person name="Oliver K."/>
            <person name="Price C."/>
            <person name="Quail M.A."/>
            <person name="Urushihara H."/>
            <person name="Hernandez J."/>
            <person name="Rabbinowitsch E."/>
            <person name="Steffen D."/>
            <person name="Sanders M."/>
            <person name="Ma J."/>
            <person name="Kohara Y."/>
            <person name="Sharp S."/>
            <person name="Simmonds M.N."/>
            <person name="Spiegler S."/>
            <person name="Tivey A."/>
            <person name="Sugano S."/>
            <person name="White B."/>
            <person name="Walker D."/>
            <person name="Woodward J.R."/>
            <person name="Winckler T."/>
            <person name="Tanaka Y."/>
            <person name="Shaulsky G."/>
            <person name="Schleicher M."/>
            <person name="Weinstock G.M."/>
            <person name="Rosenthal A."/>
            <person name="Cox E.C."/>
            <person name="Chisholm R.L."/>
            <person name="Gibbs R.A."/>
            <person name="Loomis W.F."/>
            <person name="Platzer M."/>
            <person name="Kay R.R."/>
            <person name="Williams J.G."/>
            <person name="Dear P.H."/>
            <person name="Noegel A.A."/>
            <person name="Barrell B.G."/>
            <person name="Kuspa A."/>
        </authorList>
    </citation>
    <scope>NUCLEOTIDE SEQUENCE [LARGE SCALE GENOMIC DNA]</scope>
    <source>
        <strain>AX4</strain>
    </source>
</reference>
<feature type="chain" id="PRO_0000328197" description="DPH4 homolog">
    <location>
        <begin position="1"/>
        <end position="170"/>
    </location>
</feature>
<feature type="domain" description="J" evidence="2">
    <location>
        <begin position="15"/>
        <end position="102"/>
    </location>
</feature>
<feature type="domain" description="DPH-type MB" evidence="3">
    <location>
        <begin position="112"/>
        <end position="168"/>
    </location>
</feature>
<feature type="binding site" evidence="3">
    <location>
        <position position="134"/>
    </location>
    <ligand>
        <name>Zn(2+)</name>
        <dbReference type="ChEBI" id="CHEBI:29105"/>
    </ligand>
</feature>
<feature type="binding site" evidence="3">
    <location>
        <position position="136"/>
    </location>
    <ligand>
        <name>Zn(2+)</name>
        <dbReference type="ChEBI" id="CHEBI:29105"/>
    </ligand>
</feature>
<feature type="binding site" evidence="3">
    <location>
        <position position="156"/>
    </location>
    <ligand>
        <name>Zn(2+)</name>
        <dbReference type="ChEBI" id="CHEBI:29105"/>
    </ligand>
</feature>
<feature type="binding site" evidence="3">
    <location>
        <position position="159"/>
    </location>
    <ligand>
        <name>Zn(2+)</name>
        <dbReference type="ChEBI" id="CHEBI:29105"/>
    </ligand>
</feature>
<protein>
    <recommendedName>
        <fullName>DPH4 homolog</fullName>
    </recommendedName>
    <alternativeName>
        <fullName>DnaJ homolog subfamily C member 24</fullName>
    </alternativeName>
</protein>
<dbReference type="EMBL" id="AAFI02000197">
    <property type="protein sequence ID" value="EAL61039.1"/>
    <property type="molecule type" value="Genomic_DNA"/>
</dbReference>
<dbReference type="RefSeq" id="XP_629431.1">
    <property type="nucleotide sequence ID" value="XM_629429.1"/>
</dbReference>
<dbReference type="SMR" id="Q54CI5"/>
<dbReference type="FunCoup" id="Q54CI5">
    <property type="interactions" value="39"/>
</dbReference>
<dbReference type="STRING" id="44689.Q54CI5"/>
<dbReference type="PaxDb" id="44689-DDB0238861"/>
<dbReference type="EnsemblProtists" id="EAL61039">
    <property type="protein sequence ID" value="EAL61039"/>
    <property type="gene ID" value="DDB_G0292980"/>
</dbReference>
<dbReference type="GeneID" id="8628950"/>
<dbReference type="KEGG" id="ddi:DDB_G0292980"/>
<dbReference type="dictyBase" id="DDB_G0292980">
    <property type="gene designation" value="dph4"/>
</dbReference>
<dbReference type="VEuPathDB" id="AmoebaDB:DDB_G0292980"/>
<dbReference type="eggNOG" id="KOG0714">
    <property type="taxonomic scope" value="Eukaryota"/>
</dbReference>
<dbReference type="HOGENOM" id="CLU_1753329_0_0_1"/>
<dbReference type="InParanoid" id="Q54CI5"/>
<dbReference type="OMA" id="LEDMTWE"/>
<dbReference type="PhylomeDB" id="Q54CI5"/>
<dbReference type="PRO" id="PR:Q54CI5"/>
<dbReference type="Proteomes" id="UP000002195">
    <property type="component" value="Chromosome 6"/>
</dbReference>
<dbReference type="GO" id="GO:0046872">
    <property type="term" value="F:metal ion binding"/>
    <property type="evidence" value="ECO:0007669"/>
    <property type="project" value="UniProtKB-KW"/>
</dbReference>
<dbReference type="GO" id="GO:0017183">
    <property type="term" value="P:protein histidyl modification to diphthamide"/>
    <property type="evidence" value="ECO:0000250"/>
    <property type="project" value="dictyBase"/>
</dbReference>
<dbReference type="CDD" id="cd06257">
    <property type="entry name" value="DnaJ"/>
    <property type="match status" value="1"/>
</dbReference>
<dbReference type="FunFam" id="3.10.660.10:FF:000009">
    <property type="entry name" value="DPH4 homolog"/>
    <property type="match status" value="1"/>
</dbReference>
<dbReference type="Gene3D" id="1.10.287.110">
    <property type="entry name" value="DnaJ domain"/>
    <property type="match status" value="1"/>
</dbReference>
<dbReference type="Gene3D" id="3.10.660.10">
    <property type="entry name" value="DPH Zinc finger"/>
    <property type="match status" value="1"/>
</dbReference>
<dbReference type="InterPro" id="IPR001623">
    <property type="entry name" value="DnaJ_domain"/>
</dbReference>
<dbReference type="InterPro" id="IPR018253">
    <property type="entry name" value="DnaJ_domain_CS"/>
</dbReference>
<dbReference type="InterPro" id="IPR007872">
    <property type="entry name" value="DPH_MB_dom"/>
</dbReference>
<dbReference type="InterPro" id="IPR036671">
    <property type="entry name" value="DPH_MB_sf"/>
</dbReference>
<dbReference type="InterPro" id="IPR036869">
    <property type="entry name" value="J_dom_sf"/>
</dbReference>
<dbReference type="PANTHER" id="PTHR45255">
    <property type="entry name" value="DNAJ HOMOLOG SUBFAMILY C MEMBER 24"/>
    <property type="match status" value="1"/>
</dbReference>
<dbReference type="PANTHER" id="PTHR45255:SF1">
    <property type="entry name" value="DNAJ HOMOLOG SUBFAMILY C MEMBER 24"/>
    <property type="match status" value="1"/>
</dbReference>
<dbReference type="Pfam" id="PF00226">
    <property type="entry name" value="DnaJ"/>
    <property type="match status" value="1"/>
</dbReference>
<dbReference type="Pfam" id="PF05207">
    <property type="entry name" value="Zn_ribbon_CSL"/>
    <property type="match status" value="1"/>
</dbReference>
<dbReference type="PRINTS" id="PR00625">
    <property type="entry name" value="JDOMAIN"/>
</dbReference>
<dbReference type="SMART" id="SM00271">
    <property type="entry name" value="DnaJ"/>
    <property type="match status" value="1"/>
</dbReference>
<dbReference type="SUPFAM" id="SSF46565">
    <property type="entry name" value="Chaperone J-domain"/>
    <property type="match status" value="1"/>
</dbReference>
<dbReference type="SUPFAM" id="SSF144217">
    <property type="entry name" value="CSL zinc finger"/>
    <property type="match status" value="1"/>
</dbReference>
<dbReference type="PROSITE" id="PS00636">
    <property type="entry name" value="DNAJ_1"/>
    <property type="match status" value="1"/>
</dbReference>
<dbReference type="PROSITE" id="PS50076">
    <property type="entry name" value="DNAJ_2"/>
    <property type="match status" value="1"/>
</dbReference>
<dbReference type="PROSITE" id="PS51074">
    <property type="entry name" value="DPH_MB"/>
    <property type="match status" value="1"/>
</dbReference>
<sequence length="170" mass="19882">MTNSSNNSNKCENKNYYEILKVSIDADIEEIKKSYRKLALLYHPDKLNKEENIEENINNFSNCLVNNNNNNNNSNTKDFNDIQIAWETLKDDLLRKQYDSLLLEQKRQKYSVSDEIDLDDMEFIEENSEYVYPCRCGDHYIITEDQLSEGSDVVCCSGCSLSIKVIYQME</sequence>
<accession>Q54CI5</accession>
<comment type="function">
    <text evidence="1">Stimulates the ATPase activity of several Hsp70-type chaperones. Plays a role in the diphthamide biosynthesis, a post-translational modification of histidine which occurs in translation elongation factor 2 (By similarity).</text>
</comment>
<comment type="domain">
    <text evidence="3">The DPH-type metal-binding (MB) domain can bind either zinc or iron ions.</text>
</comment>
<comment type="similarity">
    <text evidence="4">Belongs to the DPH4 family.</text>
</comment>
<organism>
    <name type="scientific">Dictyostelium discoideum</name>
    <name type="common">Social amoeba</name>
    <dbReference type="NCBI Taxonomy" id="44689"/>
    <lineage>
        <taxon>Eukaryota</taxon>
        <taxon>Amoebozoa</taxon>
        <taxon>Evosea</taxon>
        <taxon>Eumycetozoa</taxon>
        <taxon>Dictyostelia</taxon>
        <taxon>Dictyosteliales</taxon>
        <taxon>Dictyosteliaceae</taxon>
        <taxon>Dictyostelium</taxon>
    </lineage>
</organism>
<keyword id="KW-0408">Iron</keyword>
<keyword id="KW-0479">Metal-binding</keyword>
<keyword id="KW-1185">Reference proteome</keyword>
<keyword id="KW-0862">Zinc</keyword>
<evidence type="ECO:0000250" key="1"/>
<evidence type="ECO:0000255" key="2">
    <source>
        <dbReference type="PROSITE-ProRule" id="PRU00286"/>
    </source>
</evidence>
<evidence type="ECO:0000255" key="3">
    <source>
        <dbReference type="PROSITE-ProRule" id="PRU00456"/>
    </source>
</evidence>
<evidence type="ECO:0000305" key="4"/>
<proteinExistence type="inferred from homology"/>
<gene>
    <name type="primary">dph4</name>
    <name type="synonym">dnajc24</name>
    <name type="ORF">DDB_G0292980</name>
</gene>
<name>DPH4_DICDI</name>